<proteinExistence type="inferred from homology"/>
<protein>
    <recommendedName>
        <fullName evidence="1">Replication restart protein DnaT</fullName>
    </recommendedName>
</protein>
<organism>
    <name type="scientific">Shigella boydii serotype 4 (strain Sb227)</name>
    <dbReference type="NCBI Taxonomy" id="300268"/>
    <lineage>
        <taxon>Bacteria</taxon>
        <taxon>Pseudomonadati</taxon>
        <taxon>Pseudomonadota</taxon>
        <taxon>Gammaproteobacteria</taxon>
        <taxon>Enterobacterales</taxon>
        <taxon>Enterobacteriaceae</taxon>
        <taxon>Shigella</taxon>
    </lineage>
</organism>
<keyword id="KW-0235">DNA replication</keyword>
<keyword id="KW-0238">DNA-binding</keyword>
<keyword id="KW-0639">Primosome</keyword>
<reference key="1">
    <citation type="journal article" date="2005" name="Nucleic Acids Res.">
        <title>Genome dynamics and diversity of Shigella species, the etiologic agents of bacillary dysentery.</title>
        <authorList>
            <person name="Yang F."/>
            <person name="Yang J."/>
            <person name="Zhang X."/>
            <person name="Chen L."/>
            <person name="Jiang Y."/>
            <person name="Yan Y."/>
            <person name="Tang X."/>
            <person name="Wang J."/>
            <person name="Xiong Z."/>
            <person name="Dong J."/>
            <person name="Xue Y."/>
            <person name="Zhu Y."/>
            <person name="Xu X."/>
            <person name="Sun L."/>
            <person name="Chen S."/>
            <person name="Nie H."/>
            <person name="Peng J."/>
            <person name="Xu J."/>
            <person name="Wang Y."/>
            <person name="Yuan Z."/>
            <person name="Wen Y."/>
            <person name="Yao Z."/>
            <person name="Shen Y."/>
            <person name="Qiang B."/>
            <person name="Hou Y."/>
            <person name="Yu J."/>
            <person name="Jin Q."/>
        </authorList>
    </citation>
    <scope>NUCLEOTIDE SEQUENCE [LARGE SCALE GENOMIC DNA]</scope>
    <source>
        <strain>Sb227</strain>
    </source>
</reference>
<dbReference type="EMBL" id="CP000036">
    <property type="protein sequence ID" value="ABB68834.1"/>
    <property type="molecule type" value="Genomic_DNA"/>
</dbReference>
<dbReference type="RefSeq" id="WP_000098818.1">
    <property type="nucleotide sequence ID" value="NC_007613.1"/>
</dbReference>
<dbReference type="SMR" id="Q31SX4"/>
<dbReference type="GeneID" id="93777486"/>
<dbReference type="KEGG" id="sbo:SBO_4422"/>
<dbReference type="HOGENOM" id="CLU_1501592_0_0_6"/>
<dbReference type="Proteomes" id="UP000007067">
    <property type="component" value="Chromosome"/>
</dbReference>
<dbReference type="GO" id="GO:1990077">
    <property type="term" value="C:primosome complex"/>
    <property type="evidence" value="ECO:0007669"/>
    <property type="project" value="UniProtKB-KW"/>
</dbReference>
<dbReference type="GO" id="GO:0006269">
    <property type="term" value="P:DNA replication, synthesis of primer"/>
    <property type="evidence" value="ECO:0007669"/>
    <property type="project" value="UniProtKB-UniRule"/>
</dbReference>
<dbReference type="FunFam" id="1.10.8.1180:FF:000001">
    <property type="entry name" value="Primosomal protein 1"/>
    <property type="match status" value="1"/>
</dbReference>
<dbReference type="Gene3D" id="1.10.8.1180">
    <property type="match status" value="1"/>
</dbReference>
<dbReference type="HAMAP" id="MF_01061">
    <property type="entry name" value="DnaT"/>
    <property type="match status" value="1"/>
</dbReference>
<dbReference type="InterPro" id="IPR020917">
    <property type="entry name" value="DnaT"/>
</dbReference>
<dbReference type="InterPro" id="IPR040480">
    <property type="entry name" value="DnaT_DNA_bind"/>
</dbReference>
<dbReference type="NCBIfam" id="NF002770">
    <property type="entry name" value="PRK02854.1"/>
    <property type="match status" value="1"/>
</dbReference>
<dbReference type="Pfam" id="PF17948">
    <property type="entry name" value="DnaT"/>
    <property type="match status" value="1"/>
</dbReference>
<evidence type="ECO:0000255" key="1">
    <source>
        <dbReference type="HAMAP-Rule" id="MF_01061"/>
    </source>
</evidence>
<evidence type="ECO:0000256" key="2">
    <source>
        <dbReference type="SAM" id="MobiDB-lite"/>
    </source>
</evidence>
<comment type="function">
    <text evidence="1">Involved in the restart of stalled replication forks, which reloads the replicative helicase on sites other than the origin of replication. Can function in multiple replication restart pathways. Displaces ssDNA from a PriB-ssDNA complex. Probably forms a spiral filament on ssDNA.</text>
</comment>
<comment type="subunit">
    <text evidence="1">Homooligomerizes. Interacts with PriB. Component of the replication restart primosome. Primosome assembly occurs via a 'hand-off' mechanism. PriA binds to replication forks, subsequently PriB then DnaT bind; DnaT then displaces ssDNA to generate the helicase loading substrate.</text>
</comment>
<comment type="similarity">
    <text evidence="1">Belongs to the DnaT family.</text>
</comment>
<sequence>MSSRVLTPDVVGIDALVHDHQTVLAKAEGGVVAVFANNAPAFYAVTPARLAELLALEEKLARPGSDVALDDQLYQEPQAAPVAVPMGKFAMYPDWQPDADFIRLAALWGVALREPVTTEELASFIAYWQAEGKVFHHVQWQQKLARSLQIGRASNGGLPKRDVNTVSEPDSQIPPGFRG</sequence>
<feature type="chain" id="PRO_0000228961" description="Replication restart protein DnaT">
    <location>
        <begin position="1"/>
        <end position="179"/>
    </location>
</feature>
<feature type="region of interest" description="Disordered" evidence="2">
    <location>
        <begin position="156"/>
        <end position="179"/>
    </location>
</feature>
<accession>Q31SX4</accession>
<name>DNAT_SHIBS</name>
<gene>
    <name evidence="1" type="primary">dnaT</name>
    <name type="ordered locus">SBO_4422</name>
</gene>